<dbReference type="EC" id="4.1.1.49" evidence="1"/>
<dbReference type="EMBL" id="AE015929">
    <property type="protein sequence ID" value="AAO05058.1"/>
    <property type="molecule type" value="Genomic_DNA"/>
</dbReference>
<dbReference type="RefSeq" id="NP_765014.1">
    <property type="nucleotide sequence ID" value="NC_004461.1"/>
</dbReference>
<dbReference type="RefSeq" id="WP_002485319.1">
    <property type="nucleotide sequence ID" value="NC_004461.1"/>
</dbReference>
<dbReference type="SMR" id="Q8CS25"/>
<dbReference type="KEGG" id="sep:SE_1459"/>
<dbReference type="PATRIC" id="fig|176280.10.peg.1425"/>
<dbReference type="eggNOG" id="COG1866">
    <property type="taxonomic scope" value="Bacteria"/>
</dbReference>
<dbReference type="HOGENOM" id="CLU_018247_0_1_9"/>
<dbReference type="OrthoDB" id="9806325at2"/>
<dbReference type="UniPathway" id="UPA00138"/>
<dbReference type="Proteomes" id="UP000001411">
    <property type="component" value="Chromosome"/>
</dbReference>
<dbReference type="GO" id="GO:0005829">
    <property type="term" value="C:cytosol"/>
    <property type="evidence" value="ECO:0007669"/>
    <property type="project" value="TreeGrafter"/>
</dbReference>
<dbReference type="GO" id="GO:0005524">
    <property type="term" value="F:ATP binding"/>
    <property type="evidence" value="ECO:0007669"/>
    <property type="project" value="UniProtKB-UniRule"/>
</dbReference>
<dbReference type="GO" id="GO:0046872">
    <property type="term" value="F:metal ion binding"/>
    <property type="evidence" value="ECO:0007669"/>
    <property type="project" value="UniProtKB-KW"/>
</dbReference>
<dbReference type="GO" id="GO:0004612">
    <property type="term" value="F:phosphoenolpyruvate carboxykinase (ATP) activity"/>
    <property type="evidence" value="ECO:0007669"/>
    <property type="project" value="UniProtKB-UniRule"/>
</dbReference>
<dbReference type="GO" id="GO:0006094">
    <property type="term" value="P:gluconeogenesis"/>
    <property type="evidence" value="ECO:0007669"/>
    <property type="project" value="UniProtKB-UniRule"/>
</dbReference>
<dbReference type="CDD" id="cd00484">
    <property type="entry name" value="PEPCK_ATP"/>
    <property type="match status" value="1"/>
</dbReference>
<dbReference type="FunFam" id="3.40.449.10:FF:000001">
    <property type="entry name" value="Phosphoenolpyruvate carboxykinase (ATP)"/>
    <property type="match status" value="1"/>
</dbReference>
<dbReference type="Gene3D" id="3.90.228.20">
    <property type="match status" value="1"/>
</dbReference>
<dbReference type="Gene3D" id="3.40.449.10">
    <property type="entry name" value="Phosphoenolpyruvate Carboxykinase, domain 1"/>
    <property type="match status" value="1"/>
</dbReference>
<dbReference type="Gene3D" id="2.170.8.10">
    <property type="entry name" value="Phosphoenolpyruvate Carboxykinase, domain 2"/>
    <property type="match status" value="1"/>
</dbReference>
<dbReference type="HAMAP" id="MF_00453">
    <property type="entry name" value="PEPCK_ATP"/>
    <property type="match status" value="1"/>
</dbReference>
<dbReference type="InterPro" id="IPR001272">
    <property type="entry name" value="PEP_carboxykinase_ATP"/>
</dbReference>
<dbReference type="InterPro" id="IPR013035">
    <property type="entry name" value="PEP_carboxykinase_C"/>
</dbReference>
<dbReference type="InterPro" id="IPR008210">
    <property type="entry name" value="PEP_carboxykinase_N"/>
</dbReference>
<dbReference type="InterPro" id="IPR015994">
    <property type="entry name" value="PEPCK_ATP_CS"/>
</dbReference>
<dbReference type="NCBIfam" id="TIGR00224">
    <property type="entry name" value="pckA"/>
    <property type="match status" value="1"/>
</dbReference>
<dbReference type="NCBIfam" id="NF006820">
    <property type="entry name" value="PRK09344.1-2"/>
    <property type="match status" value="1"/>
</dbReference>
<dbReference type="NCBIfam" id="NF006821">
    <property type="entry name" value="PRK09344.1-3"/>
    <property type="match status" value="1"/>
</dbReference>
<dbReference type="PANTHER" id="PTHR30031:SF0">
    <property type="entry name" value="PHOSPHOENOLPYRUVATE CARBOXYKINASE (ATP)"/>
    <property type="match status" value="1"/>
</dbReference>
<dbReference type="PANTHER" id="PTHR30031">
    <property type="entry name" value="PHOSPHOENOLPYRUVATE CARBOXYKINASE ATP"/>
    <property type="match status" value="1"/>
</dbReference>
<dbReference type="Pfam" id="PF01293">
    <property type="entry name" value="PEPCK_ATP"/>
    <property type="match status" value="1"/>
</dbReference>
<dbReference type="PIRSF" id="PIRSF006294">
    <property type="entry name" value="PEP_crbxkin"/>
    <property type="match status" value="1"/>
</dbReference>
<dbReference type="SUPFAM" id="SSF68923">
    <property type="entry name" value="PEP carboxykinase N-terminal domain"/>
    <property type="match status" value="1"/>
</dbReference>
<dbReference type="SUPFAM" id="SSF53795">
    <property type="entry name" value="PEP carboxykinase-like"/>
    <property type="match status" value="1"/>
</dbReference>
<dbReference type="PROSITE" id="PS00532">
    <property type="entry name" value="PEPCK_ATP"/>
    <property type="match status" value="1"/>
</dbReference>
<sequence>MSIDTYTETLKINQLIEKATSHFQLSSTQLYKKILKNHEGELTELGAINVKTGKYTGRSPKDKFIVTEPSYKDNINWGDINQPMDEETFLKLYNKVLDYLNQKEELYIFSGYAGSDKESRLKLKVINELAWHNLFARNMFIRPESIDEAQNIKPNFTIVSAPHFKANPKLDGTHSETFVIISFKHKVILIGGTEYAGEMKKGIFSVMNYLLPMQDIMSMHCSANVGEKGDVALFFGLSGTGKTTLSADPKRKLIGDDEHGWNKNGVFNIEGGCYAKAIHLSKQKEPQIYNAIKYGTILENTVTNDDGTIDFDDNTYTENTRAAYPIDYIENIVTPSKAAHPNTIIFLTADAFGVIPPISKLTKDQAMYHFLSGFTSKLAGTERGVTEPQPSFSTCFGAPFLPLSPTKYADLLGNLIDIHDVDVYLVNTGWTGGKYGIGRRISLHYTREMVDQAISGKLKNTKYIKDDTFGLNIPVQIDSVPTTILNPINAWNNKDNYKAQAYDLIQRFNNNFKKFGKEVEHIANKGAFNQ</sequence>
<evidence type="ECO:0000255" key="1">
    <source>
        <dbReference type="HAMAP-Rule" id="MF_00453"/>
    </source>
</evidence>
<gene>
    <name evidence="1" type="primary">pckA</name>
    <name type="ordered locus">SE_1459</name>
</gene>
<feature type="chain" id="PRO_0000203850" description="Phosphoenolpyruvate carboxykinase (ATP)">
    <location>
        <begin position="1"/>
        <end position="530"/>
    </location>
</feature>
<feature type="binding site" evidence="1">
    <location>
        <position position="58"/>
    </location>
    <ligand>
        <name>substrate</name>
    </ligand>
</feature>
<feature type="binding site" evidence="1">
    <location>
        <position position="195"/>
    </location>
    <ligand>
        <name>substrate</name>
    </ligand>
</feature>
<feature type="binding site" evidence="1">
    <location>
        <position position="201"/>
    </location>
    <ligand>
        <name>ATP</name>
        <dbReference type="ChEBI" id="CHEBI:30616"/>
    </ligand>
</feature>
<feature type="binding site" evidence="1">
    <location>
        <position position="201"/>
    </location>
    <ligand>
        <name>Mn(2+)</name>
        <dbReference type="ChEBI" id="CHEBI:29035"/>
    </ligand>
</feature>
<feature type="binding site" evidence="1">
    <location>
        <position position="201"/>
    </location>
    <ligand>
        <name>substrate</name>
    </ligand>
</feature>
<feature type="binding site" evidence="1">
    <location>
        <position position="220"/>
    </location>
    <ligand>
        <name>ATP</name>
        <dbReference type="ChEBI" id="CHEBI:30616"/>
    </ligand>
</feature>
<feature type="binding site" evidence="1">
    <location>
        <position position="220"/>
    </location>
    <ligand>
        <name>Mn(2+)</name>
        <dbReference type="ChEBI" id="CHEBI:29035"/>
    </ligand>
</feature>
<feature type="binding site" evidence="1">
    <location>
        <begin position="236"/>
        <end position="244"/>
    </location>
    <ligand>
        <name>ATP</name>
        <dbReference type="ChEBI" id="CHEBI:30616"/>
    </ligand>
</feature>
<feature type="binding site" evidence="1">
    <location>
        <position position="257"/>
    </location>
    <ligand>
        <name>Mn(2+)</name>
        <dbReference type="ChEBI" id="CHEBI:29035"/>
    </ligand>
</feature>
<feature type="binding site" evidence="1">
    <location>
        <position position="285"/>
    </location>
    <ligand>
        <name>ATP</name>
        <dbReference type="ChEBI" id="CHEBI:30616"/>
    </ligand>
</feature>
<feature type="binding site" evidence="1">
    <location>
        <position position="321"/>
    </location>
    <ligand>
        <name>ATP</name>
        <dbReference type="ChEBI" id="CHEBI:30616"/>
    </ligand>
</feature>
<feature type="binding site" evidence="1">
    <location>
        <position position="321"/>
    </location>
    <ligand>
        <name>substrate</name>
    </ligand>
</feature>
<feature type="binding site" evidence="1">
    <location>
        <begin position="440"/>
        <end position="441"/>
    </location>
    <ligand>
        <name>ATP</name>
        <dbReference type="ChEBI" id="CHEBI:30616"/>
    </ligand>
</feature>
<feature type="binding site" evidence="1">
    <location>
        <position position="446"/>
    </location>
    <ligand>
        <name>ATP</name>
        <dbReference type="ChEBI" id="CHEBI:30616"/>
    </ligand>
</feature>
<protein>
    <recommendedName>
        <fullName evidence="1">Phosphoenolpyruvate carboxykinase (ATP)</fullName>
        <shortName evidence="1">PCK</shortName>
        <shortName evidence="1">PEP carboxykinase</shortName>
        <shortName evidence="1">PEPCK</shortName>
        <ecNumber evidence="1">4.1.1.49</ecNumber>
    </recommendedName>
</protein>
<name>PCKA_STAES</name>
<keyword id="KW-0067">ATP-binding</keyword>
<keyword id="KW-0963">Cytoplasm</keyword>
<keyword id="KW-0210">Decarboxylase</keyword>
<keyword id="KW-0312">Gluconeogenesis</keyword>
<keyword id="KW-0456">Lyase</keyword>
<keyword id="KW-0464">Manganese</keyword>
<keyword id="KW-0479">Metal-binding</keyword>
<keyword id="KW-0547">Nucleotide-binding</keyword>
<reference key="1">
    <citation type="journal article" date="2003" name="Mol. Microbiol.">
        <title>Genome-based analysis of virulence genes in a non-biofilm-forming Staphylococcus epidermidis strain (ATCC 12228).</title>
        <authorList>
            <person name="Zhang Y.-Q."/>
            <person name="Ren S.-X."/>
            <person name="Li H.-L."/>
            <person name="Wang Y.-X."/>
            <person name="Fu G."/>
            <person name="Yang J."/>
            <person name="Qin Z.-Q."/>
            <person name="Miao Y.-G."/>
            <person name="Wang W.-Y."/>
            <person name="Chen R.-S."/>
            <person name="Shen Y."/>
            <person name="Chen Z."/>
            <person name="Yuan Z.-H."/>
            <person name="Zhao G.-P."/>
            <person name="Qu D."/>
            <person name="Danchin A."/>
            <person name="Wen Y.-M."/>
        </authorList>
    </citation>
    <scope>NUCLEOTIDE SEQUENCE [LARGE SCALE GENOMIC DNA]</scope>
    <source>
        <strain>ATCC 12228 / FDA PCI 1200</strain>
    </source>
</reference>
<organism>
    <name type="scientific">Staphylococcus epidermidis (strain ATCC 12228 / FDA PCI 1200)</name>
    <dbReference type="NCBI Taxonomy" id="176280"/>
    <lineage>
        <taxon>Bacteria</taxon>
        <taxon>Bacillati</taxon>
        <taxon>Bacillota</taxon>
        <taxon>Bacilli</taxon>
        <taxon>Bacillales</taxon>
        <taxon>Staphylococcaceae</taxon>
        <taxon>Staphylococcus</taxon>
    </lineage>
</organism>
<proteinExistence type="inferred from homology"/>
<accession>Q8CS25</accession>
<comment type="function">
    <text evidence="1">Involved in the gluconeogenesis. Catalyzes the conversion of oxaloacetate (OAA) to phosphoenolpyruvate (PEP) through direct phosphoryl transfer between the nucleoside triphosphate and OAA.</text>
</comment>
<comment type="catalytic activity">
    <reaction evidence="1">
        <text>oxaloacetate + ATP = phosphoenolpyruvate + ADP + CO2</text>
        <dbReference type="Rhea" id="RHEA:18617"/>
        <dbReference type="ChEBI" id="CHEBI:16452"/>
        <dbReference type="ChEBI" id="CHEBI:16526"/>
        <dbReference type="ChEBI" id="CHEBI:30616"/>
        <dbReference type="ChEBI" id="CHEBI:58702"/>
        <dbReference type="ChEBI" id="CHEBI:456216"/>
        <dbReference type="EC" id="4.1.1.49"/>
    </reaction>
</comment>
<comment type="cofactor">
    <cofactor evidence="1">
        <name>Mn(2+)</name>
        <dbReference type="ChEBI" id="CHEBI:29035"/>
    </cofactor>
    <text evidence="1">Binds 1 Mn(2+) ion per subunit.</text>
</comment>
<comment type="pathway">
    <text evidence="1">Carbohydrate biosynthesis; gluconeogenesis.</text>
</comment>
<comment type="subcellular location">
    <subcellularLocation>
        <location evidence="1">Cytoplasm</location>
    </subcellularLocation>
</comment>
<comment type="similarity">
    <text evidence="1">Belongs to the phosphoenolpyruvate carboxykinase (ATP) family.</text>
</comment>